<sequence length="45" mass="5329">MRVLHVMLSFLNSLLFLPICFCLLQLKATCAVRVKKYSMKKKKKR</sequence>
<organism>
    <name type="scientific">Saccharomyces cerevisiae (strain ATCC 204508 / S288c)</name>
    <name type="common">Baker's yeast</name>
    <dbReference type="NCBI Taxonomy" id="559292"/>
    <lineage>
        <taxon>Eukaryota</taxon>
        <taxon>Fungi</taxon>
        <taxon>Dikarya</taxon>
        <taxon>Ascomycota</taxon>
        <taxon>Saccharomycotina</taxon>
        <taxon>Saccharomycetes</taxon>
        <taxon>Saccharomycetales</taxon>
        <taxon>Saccharomycetaceae</taxon>
        <taxon>Saccharomyces</taxon>
    </lineage>
</organism>
<name>YD320_YEAST</name>
<gene>
    <name type="ordered locus">YDR320W-B</name>
</gene>
<protein>
    <recommendedName>
        <fullName>Uncharacterized protein YDR320W-B</fullName>
    </recommendedName>
</protein>
<reference key="1">
    <citation type="journal article" date="1997" name="Nature">
        <title>The nucleotide sequence of Saccharomyces cerevisiae chromosome IV.</title>
        <authorList>
            <person name="Jacq C."/>
            <person name="Alt-Moerbe J."/>
            <person name="Andre B."/>
            <person name="Arnold W."/>
            <person name="Bahr A."/>
            <person name="Ballesta J.P.G."/>
            <person name="Bargues M."/>
            <person name="Baron L."/>
            <person name="Becker A."/>
            <person name="Biteau N."/>
            <person name="Bloecker H."/>
            <person name="Blugeon C."/>
            <person name="Boskovic J."/>
            <person name="Brandt P."/>
            <person name="Brueckner M."/>
            <person name="Buitrago M.J."/>
            <person name="Coster F."/>
            <person name="Delaveau T."/>
            <person name="del Rey F."/>
            <person name="Dujon B."/>
            <person name="Eide L.G."/>
            <person name="Garcia-Cantalejo J.M."/>
            <person name="Goffeau A."/>
            <person name="Gomez-Peris A."/>
            <person name="Granotier C."/>
            <person name="Hanemann V."/>
            <person name="Hankeln T."/>
            <person name="Hoheisel J.D."/>
            <person name="Jaeger W."/>
            <person name="Jimenez A."/>
            <person name="Jonniaux J.-L."/>
            <person name="Kraemer C."/>
            <person name="Kuester H."/>
            <person name="Laamanen P."/>
            <person name="Legros Y."/>
            <person name="Louis E.J."/>
            <person name="Moeller-Rieker S."/>
            <person name="Monnet A."/>
            <person name="Moro M."/>
            <person name="Mueller-Auer S."/>
            <person name="Nussbaumer B."/>
            <person name="Paricio N."/>
            <person name="Paulin L."/>
            <person name="Perea J."/>
            <person name="Perez-Alonso M."/>
            <person name="Perez-Ortin J.E."/>
            <person name="Pohl T.M."/>
            <person name="Prydz H."/>
            <person name="Purnelle B."/>
            <person name="Rasmussen S.W."/>
            <person name="Remacha M.A."/>
            <person name="Revuelta J.L."/>
            <person name="Rieger M."/>
            <person name="Salom D."/>
            <person name="Saluz H.P."/>
            <person name="Saiz J.E."/>
            <person name="Saren A.-M."/>
            <person name="Schaefer M."/>
            <person name="Scharfe M."/>
            <person name="Schmidt E.R."/>
            <person name="Schneider C."/>
            <person name="Scholler P."/>
            <person name="Schwarz S."/>
            <person name="Soler-Mira A."/>
            <person name="Urrestarazu L.A."/>
            <person name="Verhasselt P."/>
            <person name="Vissers S."/>
            <person name="Voet M."/>
            <person name="Volckaert G."/>
            <person name="Wagner G."/>
            <person name="Wambutt R."/>
            <person name="Wedler E."/>
            <person name="Wedler H."/>
            <person name="Woelfl S."/>
            <person name="Harris D.E."/>
            <person name="Bowman S."/>
            <person name="Brown D."/>
            <person name="Churcher C.M."/>
            <person name="Connor R."/>
            <person name="Dedman K."/>
            <person name="Gentles S."/>
            <person name="Hamlin N."/>
            <person name="Hunt S."/>
            <person name="Jones L."/>
            <person name="McDonald S."/>
            <person name="Murphy L.D."/>
            <person name="Niblett D."/>
            <person name="Odell C."/>
            <person name="Oliver K."/>
            <person name="Rajandream M.A."/>
            <person name="Richards C."/>
            <person name="Shore L."/>
            <person name="Walsh S.V."/>
            <person name="Barrell B.G."/>
            <person name="Dietrich F.S."/>
            <person name="Mulligan J.T."/>
            <person name="Allen E."/>
            <person name="Araujo R."/>
            <person name="Aviles E."/>
            <person name="Berno A."/>
            <person name="Carpenter J."/>
            <person name="Chen E."/>
            <person name="Cherry J.M."/>
            <person name="Chung E."/>
            <person name="Duncan M."/>
            <person name="Hunicke-Smith S."/>
            <person name="Hyman R.W."/>
            <person name="Komp C."/>
            <person name="Lashkari D."/>
            <person name="Lew H."/>
            <person name="Lin D."/>
            <person name="Mosedale D."/>
            <person name="Nakahara K."/>
            <person name="Namath A."/>
            <person name="Oefner P."/>
            <person name="Oh C."/>
            <person name="Petel F.X."/>
            <person name="Roberts D."/>
            <person name="Schramm S."/>
            <person name="Schroeder M."/>
            <person name="Shogren T."/>
            <person name="Shroff N."/>
            <person name="Winant A."/>
            <person name="Yelton M.A."/>
            <person name="Botstein D."/>
            <person name="Davis R.W."/>
            <person name="Johnston M."/>
            <person name="Andrews S."/>
            <person name="Brinkman R."/>
            <person name="Cooper J."/>
            <person name="Ding H."/>
            <person name="Du Z."/>
            <person name="Favello A."/>
            <person name="Fulton L."/>
            <person name="Gattung S."/>
            <person name="Greco T."/>
            <person name="Hallsworth K."/>
            <person name="Hawkins J."/>
            <person name="Hillier L.W."/>
            <person name="Jier M."/>
            <person name="Johnson D."/>
            <person name="Johnston L."/>
            <person name="Kirsten J."/>
            <person name="Kucaba T."/>
            <person name="Langston Y."/>
            <person name="Latreille P."/>
            <person name="Le T."/>
            <person name="Mardis E."/>
            <person name="Menezes S."/>
            <person name="Miller N."/>
            <person name="Nhan M."/>
            <person name="Pauley A."/>
            <person name="Peluso D."/>
            <person name="Rifkin L."/>
            <person name="Riles L."/>
            <person name="Taich A."/>
            <person name="Trevaskis E."/>
            <person name="Vignati D."/>
            <person name="Wilcox L."/>
            <person name="Wohldman P."/>
            <person name="Vaudin M."/>
            <person name="Wilson R."/>
            <person name="Waterston R."/>
            <person name="Albermann K."/>
            <person name="Hani J."/>
            <person name="Heumann K."/>
            <person name="Kleine K."/>
            <person name="Mewes H.-W."/>
            <person name="Zollner A."/>
            <person name="Zaccaria P."/>
        </authorList>
    </citation>
    <scope>NUCLEOTIDE SEQUENCE [LARGE SCALE GENOMIC DNA]</scope>
    <source>
        <strain>ATCC 204508 / S288c</strain>
    </source>
</reference>
<reference key="2">
    <citation type="journal article" date="2014" name="G3 (Bethesda)">
        <title>The reference genome sequence of Saccharomyces cerevisiae: Then and now.</title>
        <authorList>
            <person name="Engel S.R."/>
            <person name="Dietrich F.S."/>
            <person name="Fisk D.G."/>
            <person name="Binkley G."/>
            <person name="Balakrishnan R."/>
            <person name="Costanzo M.C."/>
            <person name="Dwight S.S."/>
            <person name="Hitz B.C."/>
            <person name="Karra K."/>
            <person name="Nash R.S."/>
            <person name="Weng S."/>
            <person name="Wong E.D."/>
            <person name="Lloyd P."/>
            <person name="Skrzypek M.S."/>
            <person name="Miyasato S.R."/>
            <person name="Simison M."/>
            <person name="Cherry J.M."/>
        </authorList>
    </citation>
    <scope>GENOME REANNOTATION</scope>
    <source>
        <strain>ATCC 204508 / S288c</strain>
    </source>
</reference>
<reference key="3">
    <citation type="journal article" date="2002" name="Genome Res.">
        <title>Parallel identification of new genes in Saccharomyces cerevisiae.</title>
        <authorList>
            <person name="Oshiro G."/>
            <person name="Wodicka L.M."/>
            <person name="Washburn M.P."/>
            <person name="Yates J.R. III"/>
            <person name="Lockhart D.J."/>
            <person name="Winzeler E.A."/>
        </authorList>
    </citation>
    <scope>IDENTIFICATION BY MASS SPECTROMETRY</scope>
</reference>
<dbReference type="EMBL" id="U32517">
    <property type="status" value="NOT_ANNOTATED_CDS"/>
    <property type="molecule type" value="Genomic_DNA"/>
</dbReference>
<dbReference type="EMBL" id="BK006938">
    <property type="status" value="NOT_ANNOTATED_CDS"/>
    <property type="molecule type" value="Genomic_DNA"/>
</dbReference>
<dbReference type="SMR" id="P0C5M0"/>
<dbReference type="STRING" id="4932.YDR320W-B"/>
<dbReference type="PaxDb" id="4932-YDR320W-B"/>
<dbReference type="EnsemblFungi" id="YDR320W-B_mRNA">
    <property type="protein sequence ID" value="YDR320W-B"/>
    <property type="gene ID" value="YDR320W-B"/>
</dbReference>
<dbReference type="AGR" id="SGD:S000028821"/>
<dbReference type="SGD" id="S000028821">
    <property type="gene designation" value="YDR320W-B"/>
</dbReference>
<dbReference type="HOGENOM" id="CLU_3207947_0_0_1"/>
<dbReference type="InParanoid" id="P0C5M0"/>
<dbReference type="PRO" id="PR:P0C5M0"/>
<dbReference type="Proteomes" id="UP000002311">
    <property type="component" value="Chromosome IV"/>
</dbReference>
<keyword id="KW-1185">Reference proteome</keyword>
<proteinExistence type="evidence at protein level"/>
<feature type="chain" id="PRO_0000309018" description="Uncharacterized protein YDR320W-B">
    <location>
        <begin position="1"/>
        <end position="45"/>
    </location>
</feature>
<accession>P0C5M0</accession>